<dbReference type="EMBL" id="DQ424856">
    <property type="protein sequence ID" value="ABE47521.1"/>
    <property type="molecule type" value="Genomic_DNA"/>
</dbReference>
<dbReference type="RefSeq" id="YP_567063.1">
    <property type="nucleotide sequence ID" value="NC_007957.1"/>
</dbReference>
<dbReference type="SMR" id="Q0ZJ33"/>
<dbReference type="FunCoup" id="Q0ZJ33">
    <property type="interactions" value="106"/>
</dbReference>
<dbReference type="STRING" id="29760.Q0ZJ33"/>
<dbReference type="EnsemblPlants" id="Vitvi10g04459_t001">
    <property type="protein sequence ID" value="Vitvi10g04459_P001"/>
    <property type="gene ID" value="Vitvi10g04459"/>
</dbReference>
<dbReference type="GeneID" id="4025116"/>
<dbReference type="Gramene" id="Vitvi10g04459_t001">
    <property type="protein sequence ID" value="Vitvi10g04459_P001"/>
    <property type="gene ID" value="Vitvi10g04459"/>
</dbReference>
<dbReference type="KEGG" id="vvi:4025116"/>
<dbReference type="InParanoid" id="Q0ZJ33"/>
<dbReference type="OrthoDB" id="438052at2759"/>
<dbReference type="Proteomes" id="UP000009183">
    <property type="component" value="Chloroplast"/>
</dbReference>
<dbReference type="ExpressionAtlas" id="Q0ZJ33">
    <property type="expression patterns" value="baseline and differential"/>
</dbReference>
<dbReference type="GO" id="GO:0009535">
    <property type="term" value="C:chloroplast thylakoid membrane"/>
    <property type="evidence" value="ECO:0007669"/>
    <property type="project" value="UniProtKB-SubCell"/>
</dbReference>
<dbReference type="GO" id="GO:0045259">
    <property type="term" value="C:proton-transporting ATP synthase complex"/>
    <property type="evidence" value="ECO:0007669"/>
    <property type="project" value="UniProtKB-KW"/>
</dbReference>
<dbReference type="GO" id="GO:0033177">
    <property type="term" value="C:proton-transporting two-sector ATPase complex, proton-transporting domain"/>
    <property type="evidence" value="ECO:0007669"/>
    <property type="project" value="InterPro"/>
</dbReference>
<dbReference type="GO" id="GO:0008289">
    <property type="term" value="F:lipid binding"/>
    <property type="evidence" value="ECO:0007669"/>
    <property type="project" value="UniProtKB-KW"/>
</dbReference>
<dbReference type="GO" id="GO:0046933">
    <property type="term" value="F:proton-transporting ATP synthase activity, rotational mechanism"/>
    <property type="evidence" value="ECO:0007669"/>
    <property type="project" value="UniProtKB-UniRule"/>
</dbReference>
<dbReference type="GO" id="GO:0015986">
    <property type="term" value="P:proton motive force-driven ATP synthesis"/>
    <property type="evidence" value="ECO:0000318"/>
    <property type="project" value="GO_Central"/>
</dbReference>
<dbReference type="CDD" id="cd18183">
    <property type="entry name" value="ATP-synt_Fo_c_ATPH"/>
    <property type="match status" value="1"/>
</dbReference>
<dbReference type="FunFam" id="1.20.20.10:FF:000001">
    <property type="entry name" value="ATP synthase subunit c, chloroplastic"/>
    <property type="match status" value="1"/>
</dbReference>
<dbReference type="Gene3D" id="1.20.20.10">
    <property type="entry name" value="F1F0 ATP synthase subunit C"/>
    <property type="match status" value="1"/>
</dbReference>
<dbReference type="HAMAP" id="MF_01396">
    <property type="entry name" value="ATP_synth_c_bact"/>
    <property type="match status" value="1"/>
</dbReference>
<dbReference type="InterPro" id="IPR005953">
    <property type="entry name" value="ATP_synth_csu_bac/chlpt"/>
</dbReference>
<dbReference type="InterPro" id="IPR000454">
    <property type="entry name" value="ATP_synth_F0_csu"/>
</dbReference>
<dbReference type="InterPro" id="IPR020537">
    <property type="entry name" value="ATP_synth_F0_csu_DDCD_BS"/>
</dbReference>
<dbReference type="InterPro" id="IPR038662">
    <property type="entry name" value="ATP_synth_F0_csu_sf"/>
</dbReference>
<dbReference type="InterPro" id="IPR002379">
    <property type="entry name" value="ATPase_proteolipid_c-like_dom"/>
</dbReference>
<dbReference type="InterPro" id="IPR035921">
    <property type="entry name" value="F/V-ATP_Csub_sf"/>
</dbReference>
<dbReference type="NCBIfam" id="TIGR01260">
    <property type="entry name" value="ATP_synt_c"/>
    <property type="match status" value="1"/>
</dbReference>
<dbReference type="NCBIfam" id="NF005608">
    <property type="entry name" value="PRK07354.1"/>
    <property type="match status" value="1"/>
</dbReference>
<dbReference type="PANTHER" id="PTHR10031">
    <property type="entry name" value="ATP SYNTHASE LIPID-BINDING PROTEIN, MITOCHONDRIAL"/>
    <property type="match status" value="1"/>
</dbReference>
<dbReference type="PANTHER" id="PTHR10031:SF0">
    <property type="entry name" value="ATPASE PROTEIN 9"/>
    <property type="match status" value="1"/>
</dbReference>
<dbReference type="Pfam" id="PF00137">
    <property type="entry name" value="ATP-synt_C"/>
    <property type="match status" value="1"/>
</dbReference>
<dbReference type="PRINTS" id="PR00124">
    <property type="entry name" value="ATPASEC"/>
</dbReference>
<dbReference type="SUPFAM" id="SSF81333">
    <property type="entry name" value="F1F0 ATP synthase subunit C"/>
    <property type="match status" value="1"/>
</dbReference>
<dbReference type="PROSITE" id="PS00605">
    <property type="entry name" value="ATPASE_C"/>
    <property type="match status" value="1"/>
</dbReference>
<sequence length="81" mass="7990">MNPLISAASVIAAGLAVGLASIGPGVGQGTAAGQAVEGIARQPEAEGKIRGTLLLSLAFMEALTIYGLVVALALLFANPFV</sequence>
<feature type="chain" id="PRO_0000362967" description="ATP synthase subunit c, chloroplastic">
    <location>
        <begin position="1"/>
        <end position="81"/>
    </location>
</feature>
<feature type="transmembrane region" description="Helical" evidence="1">
    <location>
        <begin position="3"/>
        <end position="23"/>
    </location>
</feature>
<feature type="transmembrane region" description="Helical" evidence="1">
    <location>
        <begin position="57"/>
        <end position="77"/>
    </location>
</feature>
<feature type="site" description="Reversibly protonated during proton transport" evidence="1">
    <location>
        <position position="61"/>
    </location>
</feature>
<proteinExistence type="inferred from homology"/>
<geneLocation type="chloroplast"/>
<accession>Q0ZJ33</accession>
<keyword id="KW-0066">ATP synthesis</keyword>
<keyword id="KW-0138">CF(0)</keyword>
<keyword id="KW-0150">Chloroplast</keyword>
<keyword id="KW-0375">Hydrogen ion transport</keyword>
<keyword id="KW-0406">Ion transport</keyword>
<keyword id="KW-0446">Lipid-binding</keyword>
<keyword id="KW-0472">Membrane</keyword>
<keyword id="KW-0934">Plastid</keyword>
<keyword id="KW-1185">Reference proteome</keyword>
<keyword id="KW-0793">Thylakoid</keyword>
<keyword id="KW-0812">Transmembrane</keyword>
<keyword id="KW-1133">Transmembrane helix</keyword>
<keyword id="KW-0813">Transport</keyword>
<protein>
    <recommendedName>
        <fullName evidence="1">ATP synthase subunit c, chloroplastic</fullName>
    </recommendedName>
    <alternativeName>
        <fullName evidence="1">ATP synthase F(0) sector subunit c</fullName>
    </alternativeName>
    <alternativeName>
        <fullName evidence="1">ATPase subunit III</fullName>
    </alternativeName>
    <alternativeName>
        <fullName evidence="1">F-type ATPase subunit c</fullName>
        <shortName evidence="1">F-ATPase subunit c</shortName>
    </alternativeName>
    <alternativeName>
        <fullName evidence="1">Lipid-binding protein</fullName>
    </alternativeName>
</protein>
<name>ATPH_VITVI</name>
<reference key="1">
    <citation type="journal article" date="2006" name="BMC Evol. Biol.">
        <title>Phylogenetic analyses of Vitis (Vitaceae) based on complete chloroplast genome sequences: effects of taxon sampling and phylogenetic methods on resolving relationships among rosids.</title>
        <authorList>
            <person name="Jansen R.K."/>
            <person name="Kaittanis C."/>
            <person name="Lee S.-B."/>
            <person name="Saski C."/>
            <person name="Tomkins J."/>
            <person name="Alverson A.J."/>
            <person name="Daniell H."/>
        </authorList>
    </citation>
    <scope>NUCLEOTIDE SEQUENCE [LARGE SCALE GENOMIC DNA]</scope>
    <source>
        <strain>cv. Maxxa</strain>
    </source>
</reference>
<comment type="function">
    <text evidence="1">F(1)F(0) ATP synthase produces ATP from ADP in the presence of a proton or sodium gradient. F-type ATPases consist of two structural domains, F(1) containing the extramembraneous catalytic core and F(0) containing the membrane proton channel, linked together by a central stalk and a peripheral stalk. During catalysis, ATP synthesis in the catalytic domain of F(1) is coupled via a rotary mechanism of the central stalk subunits to proton translocation.</text>
</comment>
<comment type="function">
    <text evidence="1">Key component of the F(0) channel; it plays a direct role in translocation across the membrane. A homomeric c-ring of between 10-14 subunits forms the central stalk rotor element with the F(1) delta and epsilon subunits.</text>
</comment>
<comment type="subunit">
    <text evidence="1">F-type ATPases have 2 components, F(1) - the catalytic core - and F(0) - the membrane proton channel. F(1) has five subunits: alpha(3), beta(3), gamma(1), delta(1), epsilon(1). F(0) has four main subunits: a(1), b(1), b'(1) and c(10-14). The alpha and beta chains form an alternating ring which encloses part of the gamma chain. F(1) is attached to F(0) by a central stalk formed by the gamma and epsilon chains, while a peripheral stalk is formed by the delta, b and b' chains.</text>
</comment>
<comment type="subcellular location">
    <subcellularLocation>
        <location evidence="1">Plastid</location>
        <location evidence="1">Chloroplast thylakoid membrane</location>
        <topology evidence="1">Multi-pass membrane protein</topology>
    </subcellularLocation>
</comment>
<comment type="miscellaneous">
    <text>In plastids the F-type ATPase is also known as CF(1)CF(0).</text>
</comment>
<comment type="similarity">
    <text evidence="1">Belongs to the ATPase C chain family.</text>
</comment>
<gene>
    <name evidence="1" type="primary">atpH</name>
</gene>
<evidence type="ECO:0000255" key="1">
    <source>
        <dbReference type="HAMAP-Rule" id="MF_01396"/>
    </source>
</evidence>
<organism>
    <name type="scientific">Vitis vinifera</name>
    <name type="common">Grape</name>
    <dbReference type="NCBI Taxonomy" id="29760"/>
    <lineage>
        <taxon>Eukaryota</taxon>
        <taxon>Viridiplantae</taxon>
        <taxon>Streptophyta</taxon>
        <taxon>Embryophyta</taxon>
        <taxon>Tracheophyta</taxon>
        <taxon>Spermatophyta</taxon>
        <taxon>Magnoliopsida</taxon>
        <taxon>eudicotyledons</taxon>
        <taxon>Gunneridae</taxon>
        <taxon>Pentapetalae</taxon>
        <taxon>rosids</taxon>
        <taxon>Vitales</taxon>
        <taxon>Vitaceae</taxon>
        <taxon>Viteae</taxon>
        <taxon>Vitis</taxon>
    </lineage>
</organism>